<sequence>MAAKIRRDDEVIVLTGKDKGKRGKVKNVLSSGKVIVEGINLVKKHQKPVPALNQPGGIVEKEAAIQVSNVAIFNAATGKADRVGFRFEDGKKVRFFKSNSETIK</sequence>
<feature type="chain" id="PRO_1000086492" description="Large ribosomal subunit protein uL24">
    <location>
        <begin position="1"/>
        <end position="104"/>
    </location>
</feature>
<evidence type="ECO:0000255" key="1">
    <source>
        <dbReference type="HAMAP-Rule" id="MF_01326"/>
    </source>
</evidence>
<evidence type="ECO:0000305" key="2"/>
<comment type="function">
    <text evidence="1">One of two assembly initiator proteins, it binds directly to the 5'-end of the 23S rRNA, where it nucleates assembly of the 50S subunit.</text>
</comment>
<comment type="function">
    <text evidence="1">One of the proteins that surrounds the polypeptide exit tunnel on the outside of the subunit.</text>
</comment>
<comment type="subunit">
    <text evidence="1">Part of the 50S ribosomal subunit.</text>
</comment>
<comment type="similarity">
    <text evidence="1">Belongs to the universal ribosomal protein uL24 family.</text>
</comment>
<name>RL24_SALPB</name>
<gene>
    <name evidence="1" type="primary">rplX</name>
    <name type="ordered locus">SPAB_04270</name>
</gene>
<dbReference type="EMBL" id="CP000886">
    <property type="protein sequence ID" value="ABX69587.1"/>
    <property type="molecule type" value="Genomic_DNA"/>
</dbReference>
<dbReference type="RefSeq" id="WP_000729185.1">
    <property type="nucleotide sequence ID" value="NC_010102.1"/>
</dbReference>
<dbReference type="SMR" id="A9MSY7"/>
<dbReference type="GeneID" id="93778678"/>
<dbReference type="KEGG" id="spq:SPAB_04270"/>
<dbReference type="PATRIC" id="fig|1016998.12.peg.4016"/>
<dbReference type="HOGENOM" id="CLU_093315_2_2_6"/>
<dbReference type="BioCyc" id="SENT1016998:SPAB_RS17380-MONOMER"/>
<dbReference type="Proteomes" id="UP000008556">
    <property type="component" value="Chromosome"/>
</dbReference>
<dbReference type="GO" id="GO:0005829">
    <property type="term" value="C:cytosol"/>
    <property type="evidence" value="ECO:0007669"/>
    <property type="project" value="UniProtKB-ARBA"/>
</dbReference>
<dbReference type="GO" id="GO:1990904">
    <property type="term" value="C:ribonucleoprotein complex"/>
    <property type="evidence" value="ECO:0007669"/>
    <property type="project" value="UniProtKB-KW"/>
</dbReference>
<dbReference type="GO" id="GO:0005840">
    <property type="term" value="C:ribosome"/>
    <property type="evidence" value="ECO:0007669"/>
    <property type="project" value="UniProtKB-KW"/>
</dbReference>
<dbReference type="GO" id="GO:0019843">
    <property type="term" value="F:rRNA binding"/>
    <property type="evidence" value="ECO:0007669"/>
    <property type="project" value="UniProtKB-UniRule"/>
</dbReference>
<dbReference type="GO" id="GO:0003735">
    <property type="term" value="F:structural constituent of ribosome"/>
    <property type="evidence" value="ECO:0007669"/>
    <property type="project" value="InterPro"/>
</dbReference>
<dbReference type="GO" id="GO:0006412">
    <property type="term" value="P:translation"/>
    <property type="evidence" value="ECO:0007669"/>
    <property type="project" value="UniProtKB-UniRule"/>
</dbReference>
<dbReference type="CDD" id="cd06089">
    <property type="entry name" value="KOW_RPL26"/>
    <property type="match status" value="1"/>
</dbReference>
<dbReference type="FunFam" id="2.30.30.30:FF:000004">
    <property type="entry name" value="50S ribosomal protein L24"/>
    <property type="match status" value="1"/>
</dbReference>
<dbReference type="Gene3D" id="2.30.30.30">
    <property type="match status" value="1"/>
</dbReference>
<dbReference type="HAMAP" id="MF_01326_B">
    <property type="entry name" value="Ribosomal_uL24_B"/>
    <property type="match status" value="1"/>
</dbReference>
<dbReference type="InterPro" id="IPR005824">
    <property type="entry name" value="KOW"/>
</dbReference>
<dbReference type="InterPro" id="IPR014722">
    <property type="entry name" value="Rib_uL2_dom2"/>
</dbReference>
<dbReference type="InterPro" id="IPR003256">
    <property type="entry name" value="Ribosomal_uL24"/>
</dbReference>
<dbReference type="InterPro" id="IPR005825">
    <property type="entry name" value="Ribosomal_uL24_CS"/>
</dbReference>
<dbReference type="InterPro" id="IPR041988">
    <property type="entry name" value="Ribosomal_uL24_KOW"/>
</dbReference>
<dbReference type="InterPro" id="IPR008991">
    <property type="entry name" value="Translation_prot_SH3-like_sf"/>
</dbReference>
<dbReference type="NCBIfam" id="TIGR01079">
    <property type="entry name" value="rplX_bact"/>
    <property type="match status" value="1"/>
</dbReference>
<dbReference type="PANTHER" id="PTHR12903">
    <property type="entry name" value="MITOCHONDRIAL RIBOSOMAL PROTEIN L24"/>
    <property type="match status" value="1"/>
</dbReference>
<dbReference type="Pfam" id="PF00467">
    <property type="entry name" value="KOW"/>
    <property type="match status" value="1"/>
</dbReference>
<dbReference type="Pfam" id="PF17136">
    <property type="entry name" value="ribosomal_L24"/>
    <property type="match status" value="1"/>
</dbReference>
<dbReference type="SMART" id="SM00739">
    <property type="entry name" value="KOW"/>
    <property type="match status" value="1"/>
</dbReference>
<dbReference type="SUPFAM" id="SSF50104">
    <property type="entry name" value="Translation proteins SH3-like domain"/>
    <property type="match status" value="1"/>
</dbReference>
<dbReference type="PROSITE" id="PS01108">
    <property type="entry name" value="RIBOSOMAL_L24"/>
    <property type="match status" value="1"/>
</dbReference>
<protein>
    <recommendedName>
        <fullName evidence="1">Large ribosomal subunit protein uL24</fullName>
    </recommendedName>
    <alternativeName>
        <fullName evidence="2">50S ribosomal protein L24</fullName>
    </alternativeName>
</protein>
<reference key="1">
    <citation type="submission" date="2007-11" db="EMBL/GenBank/DDBJ databases">
        <authorList>
            <consortium name="The Salmonella enterica serovar Paratyphi B Genome Sequencing Project"/>
            <person name="McClelland M."/>
            <person name="Sanderson E.K."/>
            <person name="Porwollik S."/>
            <person name="Spieth J."/>
            <person name="Clifton W.S."/>
            <person name="Fulton R."/>
            <person name="Cordes M."/>
            <person name="Wollam A."/>
            <person name="Shah N."/>
            <person name="Pepin K."/>
            <person name="Bhonagiri V."/>
            <person name="Nash W."/>
            <person name="Johnson M."/>
            <person name="Thiruvilangam P."/>
            <person name="Wilson R."/>
        </authorList>
    </citation>
    <scope>NUCLEOTIDE SEQUENCE [LARGE SCALE GENOMIC DNA]</scope>
    <source>
        <strain>ATCC BAA-1250 / SPB7</strain>
    </source>
</reference>
<keyword id="KW-0687">Ribonucleoprotein</keyword>
<keyword id="KW-0689">Ribosomal protein</keyword>
<keyword id="KW-0694">RNA-binding</keyword>
<keyword id="KW-0699">rRNA-binding</keyword>
<proteinExistence type="inferred from homology"/>
<organism>
    <name type="scientific">Salmonella paratyphi B (strain ATCC BAA-1250 / SPB7)</name>
    <dbReference type="NCBI Taxonomy" id="1016998"/>
    <lineage>
        <taxon>Bacteria</taxon>
        <taxon>Pseudomonadati</taxon>
        <taxon>Pseudomonadota</taxon>
        <taxon>Gammaproteobacteria</taxon>
        <taxon>Enterobacterales</taxon>
        <taxon>Enterobacteriaceae</taxon>
        <taxon>Salmonella</taxon>
    </lineage>
</organism>
<accession>A9MSY7</accession>